<comment type="catalytic activity">
    <reaction evidence="1">
        <text>(2R)-3-phosphoglycerate + ATP = (2R)-3-phospho-glyceroyl phosphate + ADP</text>
        <dbReference type="Rhea" id="RHEA:14801"/>
        <dbReference type="ChEBI" id="CHEBI:30616"/>
        <dbReference type="ChEBI" id="CHEBI:57604"/>
        <dbReference type="ChEBI" id="CHEBI:58272"/>
        <dbReference type="ChEBI" id="CHEBI:456216"/>
        <dbReference type="EC" id="2.7.2.3"/>
    </reaction>
</comment>
<comment type="pathway">
    <text evidence="1">Carbohydrate degradation; glycolysis; pyruvate from D-glyceraldehyde 3-phosphate: step 2/5.</text>
</comment>
<comment type="subunit">
    <text evidence="1">Monomer.</text>
</comment>
<comment type="subcellular location">
    <subcellularLocation>
        <location evidence="1">Cytoplasm</location>
    </subcellularLocation>
</comment>
<comment type="similarity">
    <text evidence="1">Belongs to the phosphoglycerate kinase family.</text>
</comment>
<reference key="1">
    <citation type="journal article" date="2007" name="Nat. Biotechnol.">
        <title>Complete genome sequence of the erythromycin-producing bacterium Saccharopolyspora erythraea NRRL23338.</title>
        <authorList>
            <person name="Oliynyk M."/>
            <person name="Samborskyy M."/>
            <person name="Lester J.B."/>
            <person name="Mironenko T."/>
            <person name="Scott N."/>
            <person name="Dickens S."/>
            <person name="Haydock S.F."/>
            <person name="Leadlay P.F."/>
        </authorList>
    </citation>
    <scope>NUCLEOTIDE SEQUENCE [LARGE SCALE GENOMIC DNA]</scope>
    <source>
        <strain>ATCC 11635 / DSM 40517 / JCM 4748 / NBRC 13426 / NCIMB 8594 / NRRL 2338</strain>
    </source>
</reference>
<keyword id="KW-0067">ATP-binding</keyword>
<keyword id="KW-0963">Cytoplasm</keyword>
<keyword id="KW-0324">Glycolysis</keyword>
<keyword id="KW-0418">Kinase</keyword>
<keyword id="KW-0547">Nucleotide-binding</keyword>
<keyword id="KW-1185">Reference proteome</keyword>
<keyword id="KW-0808">Transferase</keyword>
<sequence length="400" mass="41410">MKNLDDLLSEGVRGRRVLVRADLNVPLDGDRITDDGRVRASLPTIEKLTGAGARVVVTAHLGRPKGEPDPKFSLAPVAARLGELLGADVALAGDVVGESAKSAVAAQADGSVVLLENVRFDARETSKDDAERGALADELAALVGDGAAFVSDGFGVVHRKQASVYDIAKRVPGYAGGLVLSEVEVLRTLTGDPRRPYAVVLGGSKVSDKLGVIQALLPKVDKLLIGGGMAYTFLAAQGHSVGKSLLQQDQVESTCKLLEEHGDKLVLPVDVVVADRFAADAESRVVDADAIPADWMGLDIGPRSVELFAGILAGSRTVFWNGPAGVFEFPAFAEGTRGIAQAIVDSGSFSVVGGGDSAAAVRSLGLPEDGFSHISTGGGASLEYLEGKELPGVSVLEEGR</sequence>
<protein>
    <recommendedName>
        <fullName evidence="1">Phosphoglycerate kinase</fullName>
        <ecNumber evidence="1">2.7.2.3</ecNumber>
    </recommendedName>
</protein>
<gene>
    <name evidence="1" type="primary">pgk</name>
    <name type="ordered locus">SACE_2144</name>
</gene>
<name>PGK_SACEN</name>
<dbReference type="EC" id="2.7.2.3" evidence="1"/>
<dbReference type="EMBL" id="AM420293">
    <property type="protein sequence ID" value="CAM01450.1"/>
    <property type="molecule type" value="Genomic_DNA"/>
</dbReference>
<dbReference type="RefSeq" id="WP_009942976.1">
    <property type="nucleotide sequence ID" value="NC_009142.1"/>
</dbReference>
<dbReference type="SMR" id="A4FBM5"/>
<dbReference type="STRING" id="405948.SACE_2144"/>
<dbReference type="KEGG" id="sen:SACE_2144"/>
<dbReference type="eggNOG" id="COG0126">
    <property type="taxonomic scope" value="Bacteria"/>
</dbReference>
<dbReference type="HOGENOM" id="CLU_025427_0_2_11"/>
<dbReference type="OrthoDB" id="9808460at2"/>
<dbReference type="UniPathway" id="UPA00109">
    <property type="reaction ID" value="UER00185"/>
</dbReference>
<dbReference type="Proteomes" id="UP000006728">
    <property type="component" value="Chromosome"/>
</dbReference>
<dbReference type="GO" id="GO:0005829">
    <property type="term" value="C:cytosol"/>
    <property type="evidence" value="ECO:0007669"/>
    <property type="project" value="TreeGrafter"/>
</dbReference>
<dbReference type="GO" id="GO:0043531">
    <property type="term" value="F:ADP binding"/>
    <property type="evidence" value="ECO:0007669"/>
    <property type="project" value="TreeGrafter"/>
</dbReference>
<dbReference type="GO" id="GO:0005524">
    <property type="term" value="F:ATP binding"/>
    <property type="evidence" value="ECO:0007669"/>
    <property type="project" value="UniProtKB-KW"/>
</dbReference>
<dbReference type="GO" id="GO:0004618">
    <property type="term" value="F:phosphoglycerate kinase activity"/>
    <property type="evidence" value="ECO:0007669"/>
    <property type="project" value="UniProtKB-UniRule"/>
</dbReference>
<dbReference type="GO" id="GO:0006094">
    <property type="term" value="P:gluconeogenesis"/>
    <property type="evidence" value="ECO:0007669"/>
    <property type="project" value="TreeGrafter"/>
</dbReference>
<dbReference type="GO" id="GO:0006096">
    <property type="term" value="P:glycolytic process"/>
    <property type="evidence" value="ECO:0007669"/>
    <property type="project" value="UniProtKB-UniRule"/>
</dbReference>
<dbReference type="CDD" id="cd00318">
    <property type="entry name" value="Phosphoglycerate_kinase"/>
    <property type="match status" value="1"/>
</dbReference>
<dbReference type="FunFam" id="3.40.50.1260:FF:000006">
    <property type="entry name" value="Phosphoglycerate kinase"/>
    <property type="match status" value="1"/>
</dbReference>
<dbReference type="FunFam" id="3.40.50.1260:FF:000031">
    <property type="entry name" value="Phosphoglycerate kinase 1"/>
    <property type="match status" value="1"/>
</dbReference>
<dbReference type="Gene3D" id="3.40.50.1260">
    <property type="entry name" value="Phosphoglycerate kinase, N-terminal domain"/>
    <property type="match status" value="2"/>
</dbReference>
<dbReference type="HAMAP" id="MF_00145">
    <property type="entry name" value="Phosphoglyc_kinase"/>
    <property type="match status" value="1"/>
</dbReference>
<dbReference type="InterPro" id="IPR001576">
    <property type="entry name" value="Phosphoglycerate_kinase"/>
</dbReference>
<dbReference type="InterPro" id="IPR015911">
    <property type="entry name" value="Phosphoglycerate_kinase_CS"/>
</dbReference>
<dbReference type="InterPro" id="IPR015824">
    <property type="entry name" value="Phosphoglycerate_kinase_N"/>
</dbReference>
<dbReference type="InterPro" id="IPR036043">
    <property type="entry name" value="Phosphoglycerate_kinase_sf"/>
</dbReference>
<dbReference type="PANTHER" id="PTHR11406">
    <property type="entry name" value="PHOSPHOGLYCERATE KINASE"/>
    <property type="match status" value="1"/>
</dbReference>
<dbReference type="PANTHER" id="PTHR11406:SF23">
    <property type="entry name" value="PHOSPHOGLYCERATE KINASE 1, CHLOROPLASTIC-RELATED"/>
    <property type="match status" value="1"/>
</dbReference>
<dbReference type="Pfam" id="PF00162">
    <property type="entry name" value="PGK"/>
    <property type="match status" value="1"/>
</dbReference>
<dbReference type="PIRSF" id="PIRSF000724">
    <property type="entry name" value="Pgk"/>
    <property type="match status" value="1"/>
</dbReference>
<dbReference type="PRINTS" id="PR00477">
    <property type="entry name" value="PHGLYCKINASE"/>
</dbReference>
<dbReference type="SUPFAM" id="SSF53748">
    <property type="entry name" value="Phosphoglycerate kinase"/>
    <property type="match status" value="1"/>
</dbReference>
<dbReference type="PROSITE" id="PS00111">
    <property type="entry name" value="PGLYCERATE_KINASE"/>
    <property type="match status" value="1"/>
</dbReference>
<proteinExistence type="inferred from homology"/>
<organism>
    <name type="scientific">Saccharopolyspora erythraea (strain ATCC 11635 / DSM 40517 / JCM 4748 / NBRC 13426 / NCIMB 8594 / NRRL 2338)</name>
    <dbReference type="NCBI Taxonomy" id="405948"/>
    <lineage>
        <taxon>Bacteria</taxon>
        <taxon>Bacillati</taxon>
        <taxon>Actinomycetota</taxon>
        <taxon>Actinomycetes</taxon>
        <taxon>Pseudonocardiales</taxon>
        <taxon>Pseudonocardiaceae</taxon>
        <taxon>Saccharopolyspora</taxon>
    </lineage>
</organism>
<evidence type="ECO:0000255" key="1">
    <source>
        <dbReference type="HAMAP-Rule" id="MF_00145"/>
    </source>
</evidence>
<feature type="chain" id="PRO_1000192845" description="Phosphoglycerate kinase">
    <location>
        <begin position="1"/>
        <end position="400"/>
    </location>
</feature>
<feature type="binding site" evidence="1">
    <location>
        <begin position="22"/>
        <end position="24"/>
    </location>
    <ligand>
        <name>substrate</name>
    </ligand>
</feature>
<feature type="binding site" evidence="1">
    <location>
        <position position="37"/>
    </location>
    <ligand>
        <name>substrate</name>
    </ligand>
</feature>
<feature type="binding site" evidence="1">
    <location>
        <begin position="60"/>
        <end position="63"/>
    </location>
    <ligand>
        <name>substrate</name>
    </ligand>
</feature>
<feature type="binding site" evidence="1">
    <location>
        <position position="119"/>
    </location>
    <ligand>
        <name>substrate</name>
    </ligand>
</feature>
<feature type="binding site" evidence="1">
    <location>
        <position position="159"/>
    </location>
    <ligand>
        <name>substrate</name>
    </ligand>
</feature>
<feature type="binding site" evidence="1">
    <location>
        <position position="209"/>
    </location>
    <ligand>
        <name>ATP</name>
        <dbReference type="ChEBI" id="CHEBI:30616"/>
    </ligand>
</feature>
<feature type="binding site" evidence="1">
    <location>
        <position position="297"/>
    </location>
    <ligand>
        <name>ATP</name>
        <dbReference type="ChEBI" id="CHEBI:30616"/>
    </ligand>
</feature>
<feature type="binding site" evidence="1">
    <location>
        <position position="328"/>
    </location>
    <ligand>
        <name>ATP</name>
        <dbReference type="ChEBI" id="CHEBI:30616"/>
    </ligand>
</feature>
<feature type="binding site" evidence="1">
    <location>
        <begin position="354"/>
        <end position="357"/>
    </location>
    <ligand>
        <name>ATP</name>
        <dbReference type="ChEBI" id="CHEBI:30616"/>
    </ligand>
</feature>
<accession>A4FBM5</accession>